<gene>
    <name type="primary">hbb</name>
</gene>
<proteinExistence type="inferred from homology"/>
<accession>Q45352</accession>
<organism>
    <name type="scientific">Borrelia parkeri</name>
    <dbReference type="NCBI Taxonomy" id="141"/>
    <lineage>
        <taxon>Bacteria</taxon>
        <taxon>Pseudomonadati</taxon>
        <taxon>Spirochaetota</taxon>
        <taxon>Spirochaetia</taxon>
        <taxon>Spirochaetales</taxon>
        <taxon>Borreliaceae</taxon>
        <taxon>Borrelia</taxon>
    </lineage>
</organism>
<reference key="1">
    <citation type="journal article" date="1997" name="Int. J. Syst. Bacteriol.">
        <title>A phylogenetic analysis of Borrelia burgdorferi sensu lato based on sequence information from the hbb gene, coding for a histone-like protein.</title>
        <authorList>
            <person name="Valsangiacomo C."/>
            <person name="Balmelli T."/>
            <person name="Piffaretti J.C."/>
        </authorList>
    </citation>
    <scope>NUCLEOTIDE SEQUENCE [GENOMIC DNA]</scope>
    <source>
        <strain>M3001</strain>
    </source>
</reference>
<evidence type="ECO:0000250" key="1"/>
<evidence type="ECO:0000305" key="2"/>
<protein>
    <recommendedName>
        <fullName>DNA-binding protein HBbu</fullName>
    </recommendedName>
</protein>
<comment type="function">
    <text evidence="1">Histone-like DNA-binding protein which is capable of wrapping DNA to stabilize it, and thus to prevent its denaturation under extreme environmental conditions.</text>
</comment>
<comment type="similarity">
    <text evidence="2">Belongs to the bacterial histone-like protein family.</text>
</comment>
<dbReference type="EMBL" id="U48655">
    <property type="protein sequence ID" value="AAC73077.1"/>
    <property type="molecule type" value="Genomic_DNA"/>
</dbReference>
<dbReference type="SMR" id="Q45352"/>
<dbReference type="GO" id="GO:0005829">
    <property type="term" value="C:cytosol"/>
    <property type="evidence" value="ECO:0007669"/>
    <property type="project" value="TreeGrafter"/>
</dbReference>
<dbReference type="GO" id="GO:0003677">
    <property type="term" value="F:DNA binding"/>
    <property type="evidence" value="ECO:0007669"/>
    <property type="project" value="UniProtKB-KW"/>
</dbReference>
<dbReference type="GO" id="GO:0030527">
    <property type="term" value="F:structural constituent of chromatin"/>
    <property type="evidence" value="ECO:0007669"/>
    <property type="project" value="InterPro"/>
</dbReference>
<dbReference type="GO" id="GO:0030261">
    <property type="term" value="P:chromosome condensation"/>
    <property type="evidence" value="ECO:0007669"/>
    <property type="project" value="UniProtKB-KW"/>
</dbReference>
<dbReference type="CDD" id="cd13836">
    <property type="entry name" value="IHF_B"/>
    <property type="match status" value="1"/>
</dbReference>
<dbReference type="Gene3D" id="4.10.520.10">
    <property type="entry name" value="IHF-like DNA-binding proteins"/>
    <property type="match status" value="1"/>
</dbReference>
<dbReference type="InterPro" id="IPR000119">
    <property type="entry name" value="Hist_DNA-bd"/>
</dbReference>
<dbReference type="InterPro" id="IPR020816">
    <property type="entry name" value="Histone-like_DNA-bd_CS"/>
</dbReference>
<dbReference type="InterPro" id="IPR010992">
    <property type="entry name" value="IHF-like_DNA-bd_dom_sf"/>
</dbReference>
<dbReference type="PANTHER" id="PTHR33175">
    <property type="entry name" value="DNA-BINDING PROTEIN HU"/>
    <property type="match status" value="1"/>
</dbReference>
<dbReference type="PANTHER" id="PTHR33175:SF3">
    <property type="entry name" value="DNA-BINDING PROTEIN HU-BETA"/>
    <property type="match status" value="1"/>
</dbReference>
<dbReference type="Pfam" id="PF00216">
    <property type="entry name" value="Bac_DNA_binding"/>
    <property type="match status" value="1"/>
</dbReference>
<dbReference type="PRINTS" id="PR01727">
    <property type="entry name" value="DNABINDINGHU"/>
</dbReference>
<dbReference type="SMART" id="SM00411">
    <property type="entry name" value="BHL"/>
    <property type="match status" value="1"/>
</dbReference>
<dbReference type="SUPFAM" id="SSF47729">
    <property type="entry name" value="IHF-like DNA-binding proteins"/>
    <property type="match status" value="1"/>
</dbReference>
<dbReference type="PROSITE" id="PS00045">
    <property type="entry name" value="HISTONE_LIKE"/>
    <property type="match status" value="1"/>
</dbReference>
<feature type="chain" id="PRO_0000104922" description="DNA-binding protein HBbu">
    <location>
        <begin position="1"/>
        <end position="108"/>
    </location>
</feature>
<name>DBH_BORPR</name>
<sequence>MSFSRRPKVTKSDIVNQISLNIKNSNEKLEKKYIRLVVDAFFEELKNSLCLNNVIEFRSFGTFELRKRKGRQNARNPQTGEYVNVDDHHVAYFRPGKDLKDGVWGIKG</sequence>
<keyword id="KW-0226">DNA condensation</keyword>
<keyword id="KW-0238">DNA-binding</keyword>